<protein>
    <recommendedName>
        <fullName evidence="1">NAD-dependent protein deacylase 1</fullName>
        <ecNumber evidence="1 2">2.3.1.286</ecNumber>
    </recommendedName>
    <alternativeName>
        <fullName evidence="1">Regulatory protein SIR2 homolog 1</fullName>
    </alternativeName>
</protein>
<feature type="chain" id="PRO_0000110339" description="NAD-dependent protein deacylase 1">
    <location>
        <begin position="1"/>
        <end position="230"/>
    </location>
</feature>
<feature type="domain" description="Deacetylase sirtuin-type" evidence="2">
    <location>
        <begin position="1"/>
        <end position="226"/>
    </location>
</feature>
<feature type="active site" description="Proton acceptor" evidence="2">
    <location>
        <position position="93"/>
    </location>
</feature>
<feature type="binding site" evidence="1">
    <location>
        <position position="41"/>
    </location>
    <ligand>
        <name>substrate</name>
    </ligand>
</feature>
<feature type="binding site" evidence="1">
    <location>
        <position position="44"/>
    </location>
    <ligand>
        <name>substrate</name>
    </ligand>
</feature>
<feature type="binding site" evidence="1">
    <location>
        <begin position="75"/>
        <end position="78"/>
    </location>
    <ligand>
        <name>NAD(+)</name>
        <dbReference type="ChEBI" id="CHEBI:57540"/>
    </ligand>
</feature>
<feature type="binding site" evidence="1">
    <location>
        <position position="101"/>
    </location>
    <ligand>
        <name>Zn(2+)</name>
        <dbReference type="ChEBI" id="CHEBI:29105"/>
    </ligand>
</feature>
<feature type="binding site" evidence="1">
    <location>
        <position position="104"/>
    </location>
    <ligand>
        <name>Zn(2+)</name>
        <dbReference type="ChEBI" id="CHEBI:29105"/>
    </ligand>
</feature>
<feature type="binding site" evidence="1">
    <location>
        <position position="128"/>
    </location>
    <ligand>
        <name>Zn(2+)</name>
        <dbReference type="ChEBI" id="CHEBI:29105"/>
    </ligand>
</feature>
<feature type="binding site" evidence="1">
    <location>
        <position position="131"/>
    </location>
    <ligand>
        <name>Zn(2+)</name>
        <dbReference type="ChEBI" id="CHEBI:29105"/>
    </ligand>
</feature>
<feature type="binding site" evidence="1">
    <location>
        <begin position="168"/>
        <end position="170"/>
    </location>
    <ligand>
        <name>NAD(+)</name>
        <dbReference type="ChEBI" id="CHEBI:57540"/>
    </ligand>
</feature>
<feature type="binding site" evidence="1">
    <location>
        <begin position="194"/>
        <end position="196"/>
    </location>
    <ligand>
        <name>NAD(+)</name>
        <dbReference type="ChEBI" id="CHEBI:57540"/>
    </ligand>
</feature>
<feature type="binding site" evidence="1">
    <location>
        <position position="212"/>
    </location>
    <ligand>
        <name>NAD(+)</name>
        <dbReference type="ChEBI" id="CHEBI:57540"/>
    </ligand>
</feature>
<proteinExistence type="inferred from homology"/>
<gene>
    <name evidence="1" type="primary">cobB1</name>
    <name type="ordered locus">PSPTO_0584</name>
</gene>
<keyword id="KW-0963">Cytoplasm</keyword>
<keyword id="KW-0479">Metal-binding</keyword>
<keyword id="KW-0520">NAD</keyword>
<keyword id="KW-1185">Reference proteome</keyword>
<keyword id="KW-0808">Transferase</keyword>
<keyword id="KW-0862">Zinc</keyword>
<evidence type="ECO:0000255" key="1">
    <source>
        <dbReference type="HAMAP-Rule" id="MF_01121"/>
    </source>
</evidence>
<evidence type="ECO:0000255" key="2">
    <source>
        <dbReference type="PROSITE-ProRule" id="PRU00236"/>
    </source>
</evidence>
<organism>
    <name type="scientific">Pseudomonas syringae pv. tomato (strain ATCC BAA-871 / DC3000)</name>
    <dbReference type="NCBI Taxonomy" id="223283"/>
    <lineage>
        <taxon>Bacteria</taxon>
        <taxon>Pseudomonadati</taxon>
        <taxon>Pseudomonadota</taxon>
        <taxon>Gammaproteobacteria</taxon>
        <taxon>Pseudomonadales</taxon>
        <taxon>Pseudomonadaceae</taxon>
        <taxon>Pseudomonas</taxon>
    </lineage>
</organism>
<dbReference type="EC" id="2.3.1.286" evidence="1 2"/>
<dbReference type="EMBL" id="AE016853">
    <property type="protein sequence ID" value="AAO54126.1"/>
    <property type="molecule type" value="Genomic_DNA"/>
</dbReference>
<dbReference type="RefSeq" id="NP_790431.1">
    <property type="nucleotide sequence ID" value="NC_004578.1"/>
</dbReference>
<dbReference type="SMR" id="Q88A13"/>
<dbReference type="STRING" id="223283.PSPTO_0584"/>
<dbReference type="KEGG" id="pst:PSPTO_0584"/>
<dbReference type="PATRIC" id="fig|223283.9.peg.592"/>
<dbReference type="eggNOG" id="COG0846">
    <property type="taxonomic scope" value="Bacteria"/>
</dbReference>
<dbReference type="HOGENOM" id="CLU_023643_3_1_6"/>
<dbReference type="OrthoDB" id="9800582at2"/>
<dbReference type="PhylomeDB" id="Q88A13"/>
<dbReference type="Proteomes" id="UP000002515">
    <property type="component" value="Chromosome"/>
</dbReference>
<dbReference type="GO" id="GO:0005737">
    <property type="term" value="C:cytoplasm"/>
    <property type="evidence" value="ECO:0007669"/>
    <property type="project" value="UniProtKB-SubCell"/>
</dbReference>
<dbReference type="GO" id="GO:0017136">
    <property type="term" value="F:histone deacetylase activity, NAD-dependent"/>
    <property type="evidence" value="ECO:0007669"/>
    <property type="project" value="TreeGrafter"/>
</dbReference>
<dbReference type="GO" id="GO:0070403">
    <property type="term" value="F:NAD+ binding"/>
    <property type="evidence" value="ECO:0007669"/>
    <property type="project" value="UniProtKB-UniRule"/>
</dbReference>
<dbReference type="GO" id="GO:0036054">
    <property type="term" value="F:protein-malonyllysine demalonylase activity"/>
    <property type="evidence" value="ECO:0007669"/>
    <property type="project" value="InterPro"/>
</dbReference>
<dbReference type="GO" id="GO:0036055">
    <property type="term" value="F:protein-succinyllysine desuccinylase activity"/>
    <property type="evidence" value="ECO:0007669"/>
    <property type="project" value="UniProtKB-UniRule"/>
</dbReference>
<dbReference type="GO" id="GO:0008270">
    <property type="term" value="F:zinc ion binding"/>
    <property type="evidence" value="ECO:0007669"/>
    <property type="project" value="UniProtKB-UniRule"/>
</dbReference>
<dbReference type="Gene3D" id="3.30.1600.10">
    <property type="entry name" value="SIR2/SIRT2 'Small Domain"/>
    <property type="match status" value="1"/>
</dbReference>
<dbReference type="Gene3D" id="3.40.50.1220">
    <property type="entry name" value="TPP-binding domain"/>
    <property type="match status" value="1"/>
</dbReference>
<dbReference type="HAMAP" id="MF_01121">
    <property type="entry name" value="Sirtuin_ClassIII"/>
    <property type="match status" value="1"/>
</dbReference>
<dbReference type="InterPro" id="IPR029035">
    <property type="entry name" value="DHS-like_NAD/FAD-binding_dom"/>
</dbReference>
<dbReference type="InterPro" id="IPR050134">
    <property type="entry name" value="NAD-dep_sirtuin_deacylases"/>
</dbReference>
<dbReference type="InterPro" id="IPR003000">
    <property type="entry name" value="Sirtuin"/>
</dbReference>
<dbReference type="InterPro" id="IPR026591">
    <property type="entry name" value="Sirtuin_cat_small_dom_sf"/>
</dbReference>
<dbReference type="InterPro" id="IPR027546">
    <property type="entry name" value="Sirtuin_class_III"/>
</dbReference>
<dbReference type="InterPro" id="IPR026590">
    <property type="entry name" value="Ssirtuin_cat_dom"/>
</dbReference>
<dbReference type="PANTHER" id="PTHR11085">
    <property type="entry name" value="NAD-DEPENDENT PROTEIN DEACYLASE SIRTUIN-5, MITOCHONDRIAL-RELATED"/>
    <property type="match status" value="1"/>
</dbReference>
<dbReference type="PANTHER" id="PTHR11085:SF10">
    <property type="entry name" value="NAD-DEPENDENT PROTEIN DEACYLASE SIRTUIN-5, MITOCHONDRIAL-RELATED"/>
    <property type="match status" value="1"/>
</dbReference>
<dbReference type="Pfam" id="PF02146">
    <property type="entry name" value="SIR2"/>
    <property type="match status" value="1"/>
</dbReference>
<dbReference type="SUPFAM" id="SSF52467">
    <property type="entry name" value="DHS-like NAD/FAD-binding domain"/>
    <property type="match status" value="1"/>
</dbReference>
<dbReference type="PROSITE" id="PS50305">
    <property type="entry name" value="SIRTUIN"/>
    <property type="match status" value="1"/>
</dbReference>
<reference key="1">
    <citation type="journal article" date="2003" name="Proc. Natl. Acad. Sci. U.S.A.">
        <title>The complete genome sequence of the Arabidopsis and tomato pathogen Pseudomonas syringae pv. tomato DC3000.</title>
        <authorList>
            <person name="Buell C.R."/>
            <person name="Joardar V."/>
            <person name="Lindeberg M."/>
            <person name="Selengut J."/>
            <person name="Paulsen I.T."/>
            <person name="Gwinn M.L."/>
            <person name="Dodson R.J."/>
            <person name="DeBoy R.T."/>
            <person name="Durkin A.S."/>
            <person name="Kolonay J.F."/>
            <person name="Madupu R."/>
            <person name="Daugherty S.C."/>
            <person name="Brinkac L.M."/>
            <person name="Beanan M.J."/>
            <person name="Haft D.H."/>
            <person name="Nelson W.C."/>
            <person name="Davidsen T.M."/>
            <person name="Zafar N."/>
            <person name="Zhou L."/>
            <person name="Liu J."/>
            <person name="Yuan Q."/>
            <person name="Khouri H.M."/>
            <person name="Fedorova N.B."/>
            <person name="Tran B."/>
            <person name="Russell D."/>
            <person name="Berry K.J."/>
            <person name="Utterback T.R."/>
            <person name="Van Aken S.E."/>
            <person name="Feldblyum T.V."/>
            <person name="D'Ascenzo M."/>
            <person name="Deng W.-L."/>
            <person name="Ramos A.R."/>
            <person name="Alfano J.R."/>
            <person name="Cartinhour S."/>
            <person name="Chatterjee A.K."/>
            <person name="Delaney T.P."/>
            <person name="Lazarowitz S.G."/>
            <person name="Martin G.B."/>
            <person name="Schneider D.J."/>
            <person name="Tang X."/>
            <person name="Bender C.L."/>
            <person name="White O."/>
            <person name="Fraser C.M."/>
            <person name="Collmer A."/>
        </authorList>
    </citation>
    <scope>NUCLEOTIDE SEQUENCE [LARGE SCALE GENOMIC DNA]</scope>
    <source>
        <strain>ATCC BAA-871 / DC3000</strain>
    </source>
</reference>
<sequence length="230" mass="25167">MESGIPTYREKQTGFWACHNPERLETAKAFRENPSLVWGWYLWRRQQFSKAQPNAAHLALREMAGSMGTVSIITQNIDDLHERAGSVDVLHLHGSLSKPKCFACHRPGMVRNESAIMEEGALIEPPRCTRCNGKLRPGVVWYGEDLLPDVWKSALSLVKSCDVLISVGTSGIVTPAADLPNIALACGATVIHVNTVDVGMGAPNEIMLIGRATQILSHLSAFLSRELNSP</sequence>
<name>NPD1_PSESM</name>
<comment type="function">
    <text evidence="1">NAD-dependent lysine deacetylase and desuccinylase that specifically removes acetyl and succinyl groups on target proteins. Modulates the activities of several proteins which are inactive in their acylated form.</text>
</comment>
<comment type="catalytic activity">
    <reaction evidence="1">
        <text>N(6)-acetyl-L-lysyl-[protein] + NAD(+) + H2O = 2''-O-acetyl-ADP-D-ribose + nicotinamide + L-lysyl-[protein]</text>
        <dbReference type="Rhea" id="RHEA:43636"/>
        <dbReference type="Rhea" id="RHEA-COMP:9752"/>
        <dbReference type="Rhea" id="RHEA-COMP:10731"/>
        <dbReference type="ChEBI" id="CHEBI:15377"/>
        <dbReference type="ChEBI" id="CHEBI:17154"/>
        <dbReference type="ChEBI" id="CHEBI:29969"/>
        <dbReference type="ChEBI" id="CHEBI:57540"/>
        <dbReference type="ChEBI" id="CHEBI:61930"/>
        <dbReference type="ChEBI" id="CHEBI:83767"/>
        <dbReference type="EC" id="2.3.1.286"/>
    </reaction>
</comment>
<comment type="catalytic activity">
    <reaction evidence="1">
        <text>N(6)-succinyl-L-lysyl-[protein] + NAD(+) + H2O = 2''-O-succinyl-ADP-D-ribose + nicotinamide + L-lysyl-[protein]</text>
        <dbReference type="Rhea" id="RHEA:47668"/>
        <dbReference type="Rhea" id="RHEA-COMP:9752"/>
        <dbReference type="Rhea" id="RHEA-COMP:11877"/>
        <dbReference type="ChEBI" id="CHEBI:15377"/>
        <dbReference type="ChEBI" id="CHEBI:17154"/>
        <dbReference type="ChEBI" id="CHEBI:29969"/>
        <dbReference type="ChEBI" id="CHEBI:57540"/>
        <dbReference type="ChEBI" id="CHEBI:87830"/>
        <dbReference type="ChEBI" id="CHEBI:87832"/>
    </reaction>
</comment>
<comment type="cofactor">
    <cofactor evidence="1">
        <name>Zn(2+)</name>
        <dbReference type="ChEBI" id="CHEBI:29105"/>
    </cofactor>
    <text evidence="1">Binds 1 zinc ion per subunit.</text>
</comment>
<comment type="subcellular location">
    <subcellularLocation>
        <location evidence="1">Cytoplasm</location>
    </subcellularLocation>
</comment>
<comment type="domain">
    <text evidence="1">2 residues (Tyr-41 and Arg-44) present in a large hydrophobic pocket are probably involved in substrate specificity. They are important for desuccinylation activity, but dispensable for deacetylation activity.</text>
</comment>
<comment type="similarity">
    <text evidence="1">Belongs to the sirtuin family. Class III subfamily.</text>
</comment>
<accession>Q88A13</accession>